<dbReference type="EC" id="5.1.1.1" evidence="1"/>
<dbReference type="EMBL" id="CP000937">
    <property type="protein sequence ID" value="ABZ86352.1"/>
    <property type="molecule type" value="Genomic_DNA"/>
</dbReference>
<dbReference type="SMR" id="B0TYB0"/>
<dbReference type="KEGG" id="fph:Fphi_0131"/>
<dbReference type="eggNOG" id="COG0787">
    <property type="taxonomic scope" value="Bacteria"/>
</dbReference>
<dbReference type="HOGENOM" id="CLU_028393_2_2_6"/>
<dbReference type="UniPathway" id="UPA00042">
    <property type="reaction ID" value="UER00497"/>
</dbReference>
<dbReference type="GO" id="GO:0005829">
    <property type="term" value="C:cytosol"/>
    <property type="evidence" value="ECO:0007669"/>
    <property type="project" value="TreeGrafter"/>
</dbReference>
<dbReference type="GO" id="GO:0008784">
    <property type="term" value="F:alanine racemase activity"/>
    <property type="evidence" value="ECO:0007669"/>
    <property type="project" value="UniProtKB-UniRule"/>
</dbReference>
<dbReference type="GO" id="GO:0030170">
    <property type="term" value="F:pyridoxal phosphate binding"/>
    <property type="evidence" value="ECO:0007669"/>
    <property type="project" value="UniProtKB-UniRule"/>
</dbReference>
<dbReference type="GO" id="GO:0030632">
    <property type="term" value="P:D-alanine biosynthetic process"/>
    <property type="evidence" value="ECO:0007669"/>
    <property type="project" value="UniProtKB-UniRule"/>
</dbReference>
<dbReference type="CDD" id="cd00430">
    <property type="entry name" value="PLPDE_III_AR"/>
    <property type="match status" value="1"/>
</dbReference>
<dbReference type="FunFam" id="3.20.20.10:FF:000002">
    <property type="entry name" value="Alanine racemase"/>
    <property type="match status" value="1"/>
</dbReference>
<dbReference type="Gene3D" id="3.20.20.10">
    <property type="entry name" value="Alanine racemase"/>
    <property type="match status" value="1"/>
</dbReference>
<dbReference type="Gene3D" id="2.40.37.10">
    <property type="entry name" value="Lyase, Ornithine Decarboxylase, Chain A, domain 1"/>
    <property type="match status" value="1"/>
</dbReference>
<dbReference type="HAMAP" id="MF_01201">
    <property type="entry name" value="Ala_racemase"/>
    <property type="match status" value="1"/>
</dbReference>
<dbReference type="InterPro" id="IPR000821">
    <property type="entry name" value="Ala_racemase"/>
</dbReference>
<dbReference type="InterPro" id="IPR009006">
    <property type="entry name" value="Ala_racemase/Decarboxylase_C"/>
</dbReference>
<dbReference type="InterPro" id="IPR011079">
    <property type="entry name" value="Ala_racemase_C"/>
</dbReference>
<dbReference type="InterPro" id="IPR001608">
    <property type="entry name" value="Ala_racemase_N"/>
</dbReference>
<dbReference type="InterPro" id="IPR029066">
    <property type="entry name" value="PLP-binding_barrel"/>
</dbReference>
<dbReference type="NCBIfam" id="TIGR00492">
    <property type="entry name" value="alr"/>
    <property type="match status" value="1"/>
</dbReference>
<dbReference type="PANTHER" id="PTHR30511">
    <property type="entry name" value="ALANINE RACEMASE"/>
    <property type="match status" value="1"/>
</dbReference>
<dbReference type="PANTHER" id="PTHR30511:SF0">
    <property type="entry name" value="ALANINE RACEMASE, CATABOLIC-RELATED"/>
    <property type="match status" value="1"/>
</dbReference>
<dbReference type="Pfam" id="PF00842">
    <property type="entry name" value="Ala_racemase_C"/>
    <property type="match status" value="1"/>
</dbReference>
<dbReference type="Pfam" id="PF01168">
    <property type="entry name" value="Ala_racemase_N"/>
    <property type="match status" value="1"/>
</dbReference>
<dbReference type="PRINTS" id="PR00992">
    <property type="entry name" value="ALARACEMASE"/>
</dbReference>
<dbReference type="SMART" id="SM01005">
    <property type="entry name" value="Ala_racemase_C"/>
    <property type="match status" value="1"/>
</dbReference>
<dbReference type="SUPFAM" id="SSF50621">
    <property type="entry name" value="Alanine racemase C-terminal domain-like"/>
    <property type="match status" value="1"/>
</dbReference>
<dbReference type="SUPFAM" id="SSF51419">
    <property type="entry name" value="PLP-binding barrel"/>
    <property type="match status" value="1"/>
</dbReference>
<accession>B0TYB0</accession>
<gene>
    <name type="primary">alr</name>
    <name type="ordered locus">Fphi_0131</name>
</gene>
<evidence type="ECO:0000255" key="1">
    <source>
        <dbReference type="HAMAP-Rule" id="MF_01201"/>
    </source>
</evidence>
<sequence length="365" mass="41664">MNILKISKQTLTNNIKIIREYVGNAKICFPVKANAYGHGIEEIVENTHDLVDFFAVANSLEAFRVTAITKKPVLVFGVIYYEYLERMVSENIRVSIQDYDDIEKLEQIAKELNKKIYVHINVNTGMNRMGVCYNDVCRTIKRAYNSKWIILEGVYSHLACADNRDHPTNAKQKKRFSEIVEYAKELSQDIICHLSNSYGFLGDKEICYDMVRPGILIYGFLPEFYVERSIREIKPIARLLSKVVKIIELEEGDGVGYSMIYRGFDGEKVAVIPIGYGDGFPRELGDRGFVNIDNVMYPMAGRMSMDGLTVSLGHNEHNVKVGDVVELISDIPRNRNSAFLMAKQVNTIEYDIMSTLNDRIIREVI</sequence>
<reference key="1">
    <citation type="submission" date="2007-12" db="EMBL/GenBank/DDBJ databases">
        <title>Complete sequence of chromosome of Francisella philomiragia subsp. philomiragia ATCC 25017.</title>
        <authorList>
            <consortium name="US DOE Joint Genome Institute"/>
            <person name="Copeland A."/>
            <person name="Lucas S."/>
            <person name="Lapidus A."/>
            <person name="Barry K."/>
            <person name="Detter J.C."/>
            <person name="Glavina del Rio T."/>
            <person name="Hammon N."/>
            <person name="Israni S."/>
            <person name="Dalin E."/>
            <person name="Tice H."/>
            <person name="Pitluck S."/>
            <person name="Chain P."/>
            <person name="Malfatti S."/>
            <person name="Shin M."/>
            <person name="Vergez L."/>
            <person name="Schmutz J."/>
            <person name="Larimer F."/>
            <person name="Land M."/>
            <person name="Hauser L."/>
            <person name="Richardson P."/>
        </authorList>
    </citation>
    <scope>NUCLEOTIDE SEQUENCE [LARGE SCALE GENOMIC DNA]</scope>
    <source>
        <strain>ATCC 25017 / CCUG 19701 / FSC 153 / O#319-036</strain>
    </source>
</reference>
<comment type="function">
    <text evidence="1">Catalyzes the interconversion of L-alanine and D-alanine. May also act on other amino acids.</text>
</comment>
<comment type="catalytic activity">
    <reaction evidence="1">
        <text>L-alanine = D-alanine</text>
        <dbReference type="Rhea" id="RHEA:20249"/>
        <dbReference type="ChEBI" id="CHEBI:57416"/>
        <dbReference type="ChEBI" id="CHEBI:57972"/>
        <dbReference type="EC" id="5.1.1.1"/>
    </reaction>
</comment>
<comment type="cofactor">
    <cofactor evidence="1">
        <name>pyridoxal 5'-phosphate</name>
        <dbReference type="ChEBI" id="CHEBI:597326"/>
    </cofactor>
</comment>
<comment type="pathway">
    <text evidence="1">Amino-acid biosynthesis; D-alanine biosynthesis; D-alanine from L-alanine: step 1/1.</text>
</comment>
<comment type="similarity">
    <text evidence="1">Belongs to the alanine racemase family.</text>
</comment>
<organism>
    <name type="scientific">Francisella philomiragia subsp. philomiragia (strain ATCC 25017 / CCUG 19701 / FSC 153 / O#319-036)</name>
    <dbReference type="NCBI Taxonomy" id="484022"/>
    <lineage>
        <taxon>Bacteria</taxon>
        <taxon>Pseudomonadati</taxon>
        <taxon>Pseudomonadota</taxon>
        <taxon>Gammaproteobacteria</taxon>
        <taxon>Thiotrichales</taxon>
        <taxon>Francisellaceae</taxon>
        <taxon>Francisella</taxon>
    </lineage>
</organism>
<keyword id="KW-0413">Isomerase</keyword>
<keyword id="KW-0663">Pyridoxal phosphate</keyword>
<feature type="chain" id="PRO_1000138598" description="Alanine racemase">
    <location>
        <begin position="1"/>
        <end position="365"/>
    </location>
</feature>
<feature type="active site" description="Proton acceptor; specific for D-alanine" evidence="1">
    <location>
        <position position="32"/>
    </location>
</feature>
<feature type="active site" description="Proton acceptor; specific for L-alanine" evidence="1">
    <location>
        <position position="257"/>
    </location>
</feature>
<feature type="binding site" evidence="1">
    <location>
        <position position="128"/>
    </location>
    <ligand>
        <name>substrate</name>
    </ligand>
</feature>
<feature type="binding site" evidence="1">
    <location>
        <position position="305"/>
    </location>
    <ligand>
        <name>substrate</name>
    </ligand>
</feature>
<feature type="modified residue" description="N6-(pyridoxal phosphate)lysine" evidence="1">
    <location>
        <position position="32"/>
    </location>
</feature>
<name>ALR_FRAP2</name>
<proteinExistence type="inferred from homology"/>
<protein>
    <recommendedName>
        <fullName evidence="1">Alanine racemase</fullName>
        <ecNumber evidence="1">5.1.1.1</ecNumber>
    </recommendedName>
</protein>